<evidence type="ECO:0000255" key="1"/>
<evidence type="ECO:0000255" key="2">
    <source>
        <dbReference type="HAMAP-Rule" id="MF_01869"/>
    </source>
</evidence>
<proteinExistence type="inferred from homology"/>
<accession>B7N5M3</accession>
<comment type="function">
    <text evidence="2">Translocates 4-amino-4-deoxy-L-arabinose-phosphoundecaprenol (alpha-L-Ara4N-phosphoundecaprenol) from the cytoplasmic to the periplasmic side of the inner membrane.</text>
</comment>
<comment type="pathway">
    <text evidence="2">Bacterial outer membrane biogenesis; lipopolysaccharide biosynthesis.</text>
</comment>
<comment type="subunit">
    <text evidence="2">Heterodimer of ArnE and ArnF.</text>
</comment>
<comment type="subcellular location">
    <subcellularLocation>
        <location evidence="2">Cell inner membrane</location>
        <topology evidence="2">Multi-pass membrane protein</topology>
    </subcellularLocation>
</comment>
<comment type="similarity">
    <text evidence="2">Belongs to the ArnE family.</text>
</comment>
<feature type="chain" id="PRO_0000382966" description="Probable 4-amino-4-deoxy-L-arabinose-phosphoundecaprenol flippase subunit ArnE">
    <location>
        <begin position="1"/>
        <end position="111"/>
    </location>
</feature>
<feature type="topological domain" description="Cytoplasmic" evidence="1">
    <location>
        <begin position="1"/>
        <end position="35"/>
    </location>
</feature>
<feature type="transmembrane region" description="Helical" evidence="2">
    <location>
        <begin position="36"/>
        <end position="56"/>
    </location>
</feature>
<feature type="topological domain" description="Periplasmic" evidence="1">
    <location>
        <begin position="57"/>
        <end position="60"/>
    </location>
</feature>
<feature type="transmembrane region" description="Helical" evidence="2">
    <location>
        <begin position="61"/>
        <end position="81"/>
    </location>
</feature>
<feature type="topological domain" description="Cytoplasmic" evidence="1">
    <location>
        <begin position="82"/>
        <end position="87"/>
    </location>
</feature>
<feature type="transmembrane region" description="Helical" evidence="2">
    <location>
        <begin position="88"/>
        <end position="108"/>
    </location>
</feature>
<feature type="topological domain" description="Periplasmic" evidence="1">
    <location>
        <begin position="109"/>
        <end position="111"/>
    </location>
</feature>
<feature type="domain" description="EamA" evidence="2">
    <location>
        <begin position="40"/>
        <end position="109"/>
    </location>
</feature>
<reference key="1">
    <citation type="journal article" date="2009" name="PLoS Genet.">
        <title>Organised genome dynamics in the Escherichia coli species results in highly diverse adaptive paths.</title>
        <authorList>
            <person name="Touchon M."/>
            <person name="Hoede C."/>
            <person name="Tenaillon O."/>
            <person name="Barbe V."/>
            <person name="Baeriswyl S."/>
            <person name="Bidet P."/>
            <person name="Bingen E."/>
            <person name="Bonacorsi S."/>
            <person name="Bouchier C."/>
            <person name="Bouvet O."/>
            <person name="Calteau A."/>
            <person name="Chiapello H."/>
            <person name="Clermont O."/>
            <person name="Cruveiller S."/>
            <person name="Danchin A."/>
            <person name="Diard M."/>
            <person name="Dossat C."/>
            <person name="Karoui M.E."/>
            <person name="Frapy E."/>
            <person name="Garry L."/>
            <person name="Ghigo J.M."/>
            <person name="Gilles A.M."/>
            <person name="Johnson J."/>
            <person name="Le Bouguenec C."/>
            <person name="Lescat M."/>
            <person name="Mangenot S."/>
            <person name="Martinez-Jehanne V."/>
            <person name="Matic I."/>
            <person name="Nassif X."/>
            <person name="Oztas S."/>
            <person name="Petit M.A."/>
            <person name="Pichon C."/>
            <person name="Rouy Z."/>
            <person name="Ruf C.S."/>
            <person name="Schneider D."/>
            <person name="Tourret J."/>
            <person name="Vacherie B."/>
            <person name="Vallenet D."/>
            <person name="Medigue C."/>
            <person name="Rocha E.P.C."/>
            <person name="Denamur E."/>
        </authorList>
    </citation>
    <scope>NUCLEOTIDE SEQUENCE [LARGE SCALE GENOMIC DNA]</scope>
    <source>
        <strain>UMN026 / ExPEC</strain>
    </source>
</reference>
<sequence length="111" mass="12192">MIWLTLVFASLLSVAGQLCQKQATCFVAINKRRKHIVLWLGLALACLGLAMVLWLLVLQNVPVGIAYPMLSLNFVWVTLAAVKLWHEPVSPRHWCGVAFIIGGIVILGSTV</sequence>
<protein>
    <recommendedName>
        <fullName evidence="2">Probable 4-amino-4-deoxy-L-arabinose-phosphoundecaprenol flippase subunit ArnE</fullName>
        <shortName evidence="2">L-Ara4N-phosphoundecaprenol flippase subunit ArnE</shortName>
    </recommendedName>
    <alternativeName>
        <fullName evidence="2">Undecaprenyl phosphate-aminoarabinose flippase subunit ArnE</fullName>
    </alternativeName>
</protein>
<organism>
    <name type="scientific">Escherichia coli O17:K52:H18 (strain UMN026 / ExPEC)</name>
    <dbReference type="NCBI Taxonomy" id="585056"/>
    <lineage>
        <taxon>Bacteria</taxon>
        <taxon>Pseudomonadati</taxon>
        <taxon>Pseudomonadota</taxon>
        <taxon>Gammaproteobacteria</taxon>
        <taxon>Enterobacterales</taxon>
        <taxon>Enterobacteriaceae</taxon>
        <taxon>Escherichia</taxon>
    </lineage>
</organism>
<gene>
    <name evidence="2" type="primary">arnE</name>
    <name type="ordered locus">ECUMN_2600</name>
</gene>
<keyword id="KW-0997">Cell inner membrane</keyword>
<keyword id="KW-1003">Cell membrane</keyword>
<keyword id="KW-0441">Lipid A biosynthesis</keyword>
<keyword id="KW-0444">Lipid biosynthesis</keyword>
<keyword id="KW-0443">Lipid metabolism</keyword>
<keyword id="KW-0448">Lipopolysaccharide biosynthesis</keyword>
<keyword id="KW-0472">Membrane</keyword>
<keyword id="KW-0812">Transmembrane</keyword>
<keyword id="KW-1133">Transmembrane helix</keyword>
<keyword id="KW-0813">Transport</keyword>
<dbReference type="EMBL" id="CU928163">
    <property type="protein sequence ID" value="CAR13782.1"/>
    <property type="molecule type" value="Genomic_DNA"/>
</dbReference>
<dbReference type="RefSeq" id="WP_000638031.1">
    <property type="nucleotide sequence ID" value="NC_011751.1"/>
</dbReference>
<dbReference type="RefSeq" id="YP_002413310.1">
    <property type="nucleotide sequence ID" value="NC_011751.1"/>
</dbReference>
<dbReference type="SMR" id="B7N5M3"/>
<dbReference type="STRING" id="585056.ECUMN_2600"/>
<dbReference type="GeneID" id="93774916"/>
<dbReference type="KEGG" id="eum:ECUMN_2600"/>
<dbReference type="PATRIC" id="fig|585056.7.peg.2780"/>
<dbReference type="HOGENOM" id="CLU_131462_5_1_6"/>
<dbReference type="UniPathway" id="UPA00030"/>
<dbReference type="Proteomes" id="UP000007097">
    <property type="component" value="Chromosome"/>
</dbReference>
<dbReference type="GO" id="GO:0005886">
    <property type="term" value="C:plasma membrane"/>
    <property type="evidence" value="ECO:0007669"/>
    <property type="project" value="UniProtKB-SubCell"/>
</dbReference>
<dbReference type="GO" id="GO:1901505">
    <property type="term" value="F:carbohydrate derivative transmembrane transporter activity"/>
    <property type="evidence" value="ECO:0007669"/>
    <property type="project" value="InterPro"/>
</dbReference>
<dbReference type="GO" id="GO:0009245">
    <property type="term" value="P:lipid A biosynthetic process"/>
    <property type="evidence" value="ECO:0007669"/>
    <property type="project" value="UniProtKB-UniRule"/>
</dbReference>
<dbReference type="GO" id="GO:0009103">
    <property type="term" value="P:lipopolysaccharide biosynthetic process"/>
    <property type="evidence" value="ECO:0007669"/>
    <property type="project" value="UniProtKB-UniRule"/>
</dbReference>
<dbReference type="FunFam" id="1.10.3730.20:FF:000002">
    <property type="entry name" value="Probable 4-amino-4-deoxy-L-arabinose-phosphoundecaprenol flippase subunit ArnE"/>
    <property type="match status" value="1"/>
</dbReference>
<dbReference type="Gene3D" id="1.10.3730.20">
    <property type="match status" value="1"/>
</dbReference>
<dbReference type="HAMAP" id="MF_01869">
    <property type="entry name" value="Flippase_ArnE"/>
    <property type="match status" value="1"/>
</dbReference>
<dbReference type="InterPro" id="IPR000620">
    <property type="entry name" value="EamA_dom"/>
</dbReference>
<dbReference type="InterPro" id="IPR022883">
    <property type="entry name" value="Flippase_ArnE"/>
</dbReference>
<dbReference type="InterPro" id="IPR000390">
    <property type="entry name" value="Small_drug/metabolite_transptr"/>
</dbReference>
<dbReference type="NCBIfam" id="NF011625">
    <property type="entry name" value="PRK15051.1"/>
    <property type="match status" value="1"/>
</dbReference>
<dbReference type="PANTHER" id="PTHR30561:SF23">
    <property type="entry name" value="4-AMINO-4-DEOXY-L-ARABINOSE-PHOSPHOUNDECAPRENOL FLIPPASE SUBUNIT ARNE-RELATED"/>
    <property type="match status" value="1"/>
</dbReference>
<dbReference type="PANTHER" id="PTHR30561">
    <property type="entry name" value="SMR FAMILY PROTON-DEPENDENT DRUG EFFLUX TRANSPORTER SUGE"/>
    <property type="match status" value="1"/>
</dbReference>
<dbReference type="Pfam" id="PF00892">
    <property type="entry name" value="EamA"/>
    <property type="match status" value="1"/>
</dbReference>
<dbReference type="SUPFAM" id="SSF103481">
    <property type="entry name" value="Multidrug resistance efflux transporter EmrE"/>
    <property type="match status" value="1"/>
</dbReference>
<name>ARNE_ECOLU</name>